<comment type="function">
    <text evidence="1">Probably mediates zinc uptake from the rhizosphere.</text>
</comment>
<comment type="subcellular location">
    <subcellularLocation>
        <location evidence="3">Cell membrane</location>
        <topology evidence="3">Multi-pass membrane protein</topology>
    </subcellularLocation>
</comment>
<comment type="similarity">
    <text evidence="3">Belongs to the ZIP transporter (TC 2.A.5) family.</text>
</comment>
<gene>
    <name type="primary">ZIP7</name>
    <name type="ordered locus">At2g04032</name>
    <name type="ORF">F3C11.15</name>
</gene>
<name>ZIP7_ARATH</name>
<accession>Q8W246</accession>
<accession>Q6DBB4</accession>
<organism>
    <name type="scientific">Arabidopsis thaliana</name>
    <name type="common">Mouse-ear cress</name>
    <dbReference type="NCBI Taxonomy" id="3702"/>
    <lineage>
        <taxon>Eukaryota</taxon>
        <taxon>Viridiplantae</taxon>
        <taxon>Streptophyta</taxon>
        <taxon>Embryophyta</taxon>
        <taxon>Tracheophyta</taxon>
        <taxon>Spermatophyta</taxon>
        <taxon>Magnoliopsida</taxon>
        <taxon>eudicotyledons</taxon>
        <taxon>Gunneridae</taxon>
        <taxon>Pentapetalae</taxon>
        <taxon>rosids</taxon>
        <taxon>malvids</taxon>
        <taxon>Brassicales</taxon>
        <taxon>Brassicaceae</taxon>
        <taxon>Camelineae</taxon>
        <taxon>Arabidopsis</taxon>
    </lineage>
</organism>
<evidence type="ECO:0000250" key="1"/>
<evidence type="ECO:0000255" key="2"/>
<evidence type="ECO:0000305" key="3"/>
<sequence>MAYSKACYKLTTITILLLSFTLPSLAGNAENADVSECKAESGDLSCHNNKEAQKLKIIAIPSILVASMIGVSLPLFSRSIPALGPDREMSVIVKTLASGVILATGFMHVLPDSFDDLTSKCLPEDPWQKFPFATFITMISALLVLMIESFAMCAYARRTSKREGEVVPLENGSNSVDTQNDIQTLENGSSYVEKQEKVNEDKTSELLRNKVIAQILELGIVVHSVVIGLAMGASDNKCTVQSLIAALCFHQLFEGMGLGGSILQAQFKSKTNWTMVFFFSVTTPFGIVLGMAIQKIYDETSPTALIVVGVLNACSAGLLIYMALVNLLAHEFFGPKIQGNIKLHVLGYVATFTGAAGMSLMAKWA</sequence>
<feature type="signal peptide" evidence="2">
    <location>
        <begin position="1"/>
        <end position="26"/>
    </location>
</feature>
<feature type="chain" id="PRO_0000041645" description="Zinc transporter 7">
    <location>
        <begin position="27"/>
        <end position="365"/>
    </location>
</feature>
<feature type="topological domain" description="Extracellular" evidence="2">
    <location>
        <begin position="27"/>
        <end position="56"/>
    </location>
</feature>
<feature type="transmembrane region" description="Helical" evidence="2">
    <location>
        <begin position="57"/>
        <end position="77"/>
    </location>
</feature>
<feature type="topological domain" description="Cytoplasmic" evidence="2">
    <location>
        <begin position="78"/>
        <end position="90"/>
    </location>
</feature>
<feature type="transmembrane region" description="Helical" evidence="2">
    <location>
        <begin position="91"/>
        <end position="111"/>
    </location>
</feature>
<feature type="topological domain" description="Extracellular" evidence="2">
    <location>
        <begin position="112"/>
        <end position="129"/>
    </location>
</feature>
<feature type="transmembrane region" description="Helical" evidence="2">
    <location>
        <begin position="130"/>
        <end position="150"/>
    </location>
</feature>
<feature type="topological domain" description="Cytoplasmic" evidence="2">
    <location>
        <begin position="151"/>
        <end position="210"/>
    </location>
</feature>
<feature type="transmembrane region" description="Helical" evidence="2">
    <location>
        <begin position="211"/>
        <end position="231"/>
    </location>
</feature>
<feature type="topological domain" description="Extracellular" evidence="2">
    <location>
        <begin position="232"/>
        <end position="242"/>
    </location>
</feature>
<feature type="transmembrane region" description="Helical" evidence="2">
    <location>
        <begin position="243"/>
        <end position="263"/>
    </location>
</feature>
<feature type="topological domain" description="Cytoplasmic" evidence="2">
    <location>
        <begin position="264"/>
        <end position="272"/>
    </location>
</feature>
<feature type="transmembrane region" description="Helical" evidence="2">
    <location>
        <begin position="273"/>
        <end position="293"/>
    </location>
</feature>
<feature type="topological domain" description="Extracellular" evidence="2">
    <location>
        <begin position="294"/>
        <end position="304"/>
    </location>
</feature>
<feature type="transmembrane region" description="Helical" evidence="2">
    <location>
        <begin position="305"/>
        <end position="325"/>
    </location>
</feature>
<feature type="topological domain" description="Cytoplasmic" evidence="2">
    <location>
        <begin position="326"/>
        <end position="344"/>
    </location>
</feature>
<feature type="transmembrane region" description="Helical" evidence="2">
    <location>
        <begin position="345"/>
        <end position="365"/>
    </location>
</feature>
<proteinExistence type="evidence at transcript level"/>
<keyword id="KW-1003">Cell membrane</keyword>
<keyword id="KW-0406">Ion transport</keyword>
<keyword id="KW-0472">Membrane</keyword>
<keyword id="KW-1185">Reference proteome</keyword>
<keyword id="KW-0732">Signal</keyword>
<keyword id="KW-0812">Transmembrane</keyword>
<keyword id="KW-1133">Transmembrane helix</keyword>
<keyword id="KW-0813">Transport</keyword>
<keyword id="KW-0862">Zinc</keyword>
<keyword id="KW-0864">Zinc transport</keyword>
<dbReference type="EMBL" id="AF369911">
    <property type="protein sequence ID" value="AAL38434.1"/>
    <property type="molecule type" value="Genomic_DNA"/>
</dbReference>
<dbReference type="EMBL" id="AC007167">
    <property type="protein sequence ID" value="AAM15429.1"/>
    <property type="molecule type" value="Genomic_DNA"/>
</dbReference>
<dbReference type="EMBL" id="AC007178">
    <property type="protein sequence ID" value="AAM15439.1"/>
    <property type="molecule type" value="Genomic_DNA"/>
</dbReference>
<dbReference type="EMBL" id="CP002685">
    <property type="protein sequence ID" value="AEC05780.1"/>
    <property type="molecule type" value="Genomic_DNA"/>
</dbReference>
<dbReference type="EMBL" id="BT015108">
    <property type="protein sequence ID" value="AAT71980.1"/>
    <property type="molecule type" value="mRNA"/>
</dbReference>
<dbReference type="RefSeq" id="NP_178488.1">
    <property type="nucleotide sequence ID" value="NM_126440.3"/>
</dbReference>
<dbReference type="FunCoup" id="Q8W246">
    <property type="interactions" value="2593"/>
</dbReference>
<dbReference type="STRING" id="3702.Q8W246"/>
<dbReference type="PaxDb" id="3702-AT2G04032.1"/>
<dbReference type="EnsemblPlants" id="AT2G04032.1">
    <property type="protein sequence ID" value="AT2G04032.1"/>
    <property type="gene ID" value="AT2G04032"/>
</dbReference>
<dbReference type="GeneID" id="814931"/>
<dbReference type="Gramene" id="AT2G04032.1">
    <property type="protein sequence ID" value="AT2G04032.1"/>
    <property type="gene ID" value="AT2G04032"/>
</dbReference>
<dbReference type="KEGG" id="ath:AT2G04032"/>
<dbReference type="Araport" id="AT2G04032"/>
<dbReference type="TAIR" id="AT2G04032">
    <property type="gene designation" value="ZIP7"/>
</dbReference>
<dbReference type="eggNOG" id="KOG1558">
    <property type="taxonomic scope" value="Eukaryota"/>
</dbReference>
<dbReference type="HOGENOM" id="CLU_027089_3_0_1"/>
<dbReference type="InParanoid" id="Q8W246"/>
<dbReference type="OMA" id="QYTGCHS"/>
<dbReference type="OrthoDB" id="448280at2759"/>
<dbReference type="PhylomeDB" id="Q8W246"/>
<dbReference type="PRO" id="PR:Q8W246"/>
<dbReference type="Proteomes" id="UP000006548">
    <property type="component" value="Chromosome 2"/>
</dbReference>
<dbReference type="ExpressionAtlas" id="Q8W246">
    <property type="expression patterns" value="baseline and differential"/>
</dbReference>
<dbReference type="GO" id="GO:0005886">
    <property type="term" value="C:plasma membrane"/>
    <property type="evidence" value="ECO:0007669"/>
    <property type="project" value="UniProtKB-SubCell"/>
</dbReference>
<dbReference type="GO" id="GO:0005385">
    <property type="term" value="F:zinc ion transmembrane transporter activity"/>
    <property type="evidence" value="ECO:0007669"/>
    <property type="project" value="InterPro"/>
</dbReference>
<dbReference type="InterPro" id="IPR003689">
    <property type="entry name" value="ZIP"/>
</dbReference>
<dbReference type="InterPro" id="IPR004698">
    <property type="entry name" value="Zn/Fe_permease_fun/pln"/>
</dbReference>
<dbReference type="NCBIfam" id="TIGR00820">
    <property type="entry name" value="zip"/>
    <property type="match status" value="1"/>
</dbReference>
<dbReference type="PANTHER" id="PTHR11040:SF41">
    <property type="entry name" value="ZINC TRANSPORTER 7"/>
    <property type="match status" value="1"/>
</dbReference>
<dbReference type="PANTHER" id="PTHR11040">
    <property type="entry name" value="ZINC/IRON TRANSPORTER"/>
    <property type="match status" value="1"/>
</dbReference>
<dbReference type="Pfam" id="PF02535">
    <property type="entry name" value="Zip"/>
    <property type="match status" value="1"/>
</dbReference>
<protein>
    <recommendedName>
        <fullName>Zinc transporter 7</fullName>
    </recommendedName>
    <alternativeName>
        <fullName>ZRT/IRT-like protein 7</fullName>
    </alternativeName>
</protein>
<reference key="1">
    <citation type="journal article" date="2001" name="Plant Physiol.">
        <title>Phylogenetic relationships within cation transporter families of Arabidopsis.</title>
        <authorList>
            <person name="Maeser P."/>
            <person name="Thomine S."/>
            <person name="Schroeder J.I."/>
            <person name="Ward J.M."/>
            <person name="Hirschi K."/>
            <person name="Sze H."/>
            <person name="Talke I.N."/>
            <person name="Amtmann A."/>
            <person name="Maathuis F.J.M."/>
            <person name="Sanders D."/>
            <person name="Harper J.F."/>
            <person name="Tchieu J."/>
            <person name="Gribskov M."/>
            <person name="Persans M.W."/>
            <person name="Salt D.E."/>
            <person name="Kim S.A."/>
            <person name="Guerinot M.L."/>
        </authorList>
    </citation>
    <scope>NUCLEOTIDE SEQUENCE [GENOMIC DNA]</scope>
</reference>
<reference key="2">
    <citation type="journal article" date="1999" name="Nature">
        <title>Sequence and analysis of chromosome 2 of the plant Arabidopsis thaliana.</title>
        <authorList>
            <person name="Lin X."/>
            <person name="Kaul S."/>
            <person name="Rounsley S.D."/>
            <person name="Shea T.P."/>
            <person name="Benito M.-I."/>
            <person name="Town C.D."/>
            <person name="Fujii C.Y."/>
            <person name="Mason T.M."/>
            <person name="Bowman C.L."/>
            <person name="Barnstead M.E."/>
            <person name="Feldblyum T.V."/>
            <person name="Buell C.R."/>
            <person name="Ketchum K.A."/>
            <person name="Lee J.J."/>
            <person name="Ronning C.M."/>
            <person name="Koo H.L."/>
            <person name="Moffat K.S."/>
            <person name="Cronin L.A."/>
            <person name="Shen M."/>
            <person name="Pai G."/>
            <person name="Van Aken S."/>
            <person name="Umayam L."/>
            <person name="Tallon L.J."/>
            <person name="Gill J.E."/>
            <person name="Adams M.D."/>
            <person name="Carrera A.J."/>
            <person name="Creasy T.H."/>
            <person name="Goodman H.M."/>
            <person name="Somerville C.R."/>
            <person name="Copenhaver G.P."/>
            <person name="Preuss D."/>
            <person name="Nierman W.C."/>
            <person name="White O."/>
            <person name="Eisen J.A."/>
            <person name="Salzberg S.L."/>
            <person name="Fraser C.M."/>
            <person name="Venter J.C."/>
        </authorList>
    </citation>
    <scope>NUCLEOTIDE SEQUENCE [LARGE SCALE GENOMIC DNA]</scope>
    <source>
        <strain>cv. Columbia</strain>
    </source>
</reference>
<reference key="3">
    <citation type="journal article" date="2017" name="Plant J.">
        <title>Araport11: a complete reannotation of the Arabidopsis thaliana reference genome.</title>
        <authorList>
            <person name="Cheng C.Y."/>
            <person name="Krishnakumar V."/>
            <person name="Chan A.P."/>
            <person name="Thibaud-Nissen F."/>
            <person name="Schobel S."/>
            <person name="Town C.D."/>
        </authorList>
    </citation>
    <scope>GENOME REANNOTATION</scope>
    <source>
        <strain>cv. Columbia</strain>
    </source>
</reference>
<reference key="4">
    <citation type="submission" date="2004-07" db="EMBL/GenBank/DDBJ databases">
        <title>Arabidopsis ORF clones.</title>
        <authorList>
            <person name="Cheuk R.F."/>
            <person name="Chen H."/>
            <person name="Kim C.J."/>
            <person name="Shinn P."/>
            <person name="Ecker J.R."/>
        </authorList>
    </citation>
    <scope>NUCLEOTIDE SEQUENCE [LARGE SCALE MRNA]</scope>
    <source>
        <strain>cv. Columbia</strain>
    </source>
</reference>